<name>RL22_CAMFF</name>
<evidence type="ECO:0000255" key="1">
    <source>
        <dbReference type="HAMAP-Rule" id="MF_01331"/>
    </source>
</evidence>
<evidence type="ECO:0000305" key="2"/>
<organism>
    <name type="scientific">Campylobacter fetus subsp. fetus (strain 82-40)</name>
    <dbReference type="NCBI Taxonomy" id="360106"/>
    <lineage>
        <taxon>Bacteria</taxon>
        <taxon>Pseudomonadati</taxon>
        <taxon>Campylobacterota</taxon>
        <taxon>Epsilonproteobacteria</taxon>
        <taxon>Campylobacterales</taxon>
        <taxon>Campylobacteraceae</taxon>
        <taxon>Campylobacter</taxon>
    </lineage>
</organism>
<keyword id="KW-0687">Ribonucleoprotein</keyword>
<keyword id="KW-0689">Ribosomal protein</keyword>
<keyword id="KW-0694">RNA-binding</keyword>
<keyword id="KW-0699">rRNA-binding</keyword>
<gene>
    <name evidence="1" type="primary">rplV</name>
    <name type="ordered locus">CFF8240_0039</name>
</gene>
<sequence length="110" mass="11893">MSRAIIKFIRLSPTKARLIADEVQGMNAELALASLSFMPNRGAKYIASAISSAVANGGFEPEEVVVKSCRVDAGPVLKRFRPRARGSASRIRKPTSHILVEVSKPESKEA</sequence>
<proteinExistence type="inferred from homology"/>
<accession>A0RM16</accession>
<reference key="1">
    <citation type="submission" date="2006-11" db="EMBL/GenBank/DDBJ databases">
        <title>Sequence of Campylobacter fetus subsp. fetus 82-40.</title>
        <authorList>
            <person name="Fouts D.E."/>
            <person name="Nelson K.E."/>
        </authorList>
    </citation>
    <scope>NUCLEOTIDE SEQUENCE [LARGE SCALE GENOMIC DNA]</scope>
    <source>
        <strain>82-40</strain>
    </source>
</reference>
<dbReference type="EMBL" id="CP000487">
    <property type="protein sequence ID" value="ABK82956.1"/>
    <property type="molecule type" value="Genomic_DNA"/>
</dbReference>
<dbReference type="RefSeq" id="WP_002847968.1">
    <property type="nucleotide sequence ID" value="NC_008599.1"/>
</dbReference>
<dbReference type="SMR" id="A0RM16"/>
<dbReference type="GeneID" id="61063882"/>
<dbReference type="KEGG" id="cff:CFF8240_0039"/>
<dbReference type="eggNOG" id="COG0091">
    <property type="taxonomic scope" value="Bacteria"/>
</dbReference>
<dbReference type="HOGENOM" id="CLU_083987_3_2_7"/>
<dbReference type="Proteomes" id="UP000000760">
    <property type="component" value="Chromosome"/>
</dbReference>
<dbReference type="GO" id="GO:0022625">
    <property type="term" value="C:cytosolic large ribosomal subunit"/>
    <property type="evidence" value="ECO:0007669"/>
    <property type="project" value="TreeGrafter"/>
</dbReference>
<dbReference type="GO" id="GO:0019843">
    <property type="term" value="F:rRNA binding"/>
    <property type="evidence" value="ECO:0007669"/>
    <property type="project" value="UniProtKB-UniRule"/>
</dbReference>
<dbReference type="GO" id="GO:0003735">
    <property type="term" value="F:structural constituent of ribosome"/>
    <property type="evidence" value="ECO:0007669"/>
    <property type="project" value="InterPro"/>
</dbReference>
<dbReference type="GO" id="GO:0006412">
    <property type="term" value="P:translation"/>
    <property type="evidence" value="ECO:0007669"/>
    <property type="project" value="UniProtKB-UniRule"/>
</dbReference>
<dbReference type="CDD" id="cd00336">
    <property type="entry name" value="Ribosomal_L22"/>
    <property type="match status" value="1"/>
</dbReference>
<dbReference type="Gene3D" id="3.90.470.10">
    <property type="entry name" value="Ribosomal protein L22/L17"/>
    <property type="match status" value="1"/>
</dbReference>
<dbReference type="HAMAP" id="MF_01331_B">
    <property type="entry name" value="Ribosomal_uL22_B"/>
    <property type="match status" value="1"/>
</dbReference>
<dbReference type="InterPro" id="IPR001063">
    <property type="entry name" value="Ribosomal_uL22"/>
</dbReference>
<dbReference type="InterPro" id="IPR005727">
    <property type="entry name" value="Ribosomal_uL22_bac/chlpt-type"/>
</dbReference>
<dbReference type="InterPro" id="IPR047867">
    <property type="entry name" value="Ribosomal_uL22_bac/org-type"/>
</dbReference>
<dbReference type="InterPro" id="IPR018260">
    <property type="entry name" value="Ribosomal_uL22_CS"/>
</dbReference>
<dbReference type="InterPro" id="IPR036394">
    <property type="entry name" value="Ribosomal_uL22_sf"/>
</dbReference>
<dbReference type="NCBIfam" id="TIGR01044">
    <property type="entry name" value="rplV_bact"/>
    <property type="match status" value="1"/>
</dbReference>
<dbReference type="PANTHER" id="PTHR13501">
    <property type="entry name" value="CHLOROPLAST 50S RIBOSOMAL PROTEIN L22-RELATED"/>
    <property type="match status" value="1"/>
</dbReference>
<dbReference type="PANTHER" id="PTHR13501:SF8">
    <property type="entry name" value="LARGE RIBOSOMAL SUBUNIT PROTEIN UL22M"/>
    <property type="match status" value="1"/>
</dbReference>
<dbReference type="Pfam" id="PF00237">
    <property type="entry name" value="Ribosomal_L22"/>
    <property type="match status" value="1"/>
</dbReference>
<dbReference type="SUPFAM" id="SSF54843">
    <property type="entry name" value="Ribosomal protein L22"/>
    <property type="match status" value="1"/>
</dbReference>
<dbReference type="PROSITE" id="PS00464">
    <property type="entry name" value="RIBOSOMAL_L22"/>
    <property type="match status" value="1"/>
</dbReference>
<protein>
    <recommendedName>
        <fullName evidence="1">Large ribosomal subunit protein uL22</fullName>
    </recommendedName>
    <alternativeName>
        <fullName evidence="2">50S ribosomal protein L22</fullName>
    </alternativeName>
</protein>
<feature type="chain" id="PRO_1000052554" description="Large ribosomal subunit protein uL22">
    <location>
        <begin position="1"/>
        <end position="110"/>
    </location>
</feature>
<comment type="function">
    <text evidence="1">This protein binds specifically to 23S rRNA; its binding is stimulated by other ribosomal proteins, e.g. L4, L17, and L20. It is important during the early stages of 50S assembly. It makes multiple contacts with different domains of the 23S rRNA in the assembled 50S subunit and ribosome (By similarity).</text>
</comment>
<comment type="function">
    <text evidence="1">The globular domain of the protein is located near the polypeptide exit tunnel on the outside of the subunit, while an extended beta-hairpin is found that lines the wall of the exit tunnel in the center of the 70S ribosome.</text>
</comment>
<comment type="subunit">
    <text evidence="1">Part of the 50S ribosomal subunit.</text>
</comment>
<comment type="similarity">
    <text evidence="1">Belongs to the universal ribosomal protein uL22 family.</text>
</comment>